<proteinExistence type="inferred from homology"/>
<feature type="chain" id="PRO_0000382111" description="ATP synthase subunit delta">
    <location>
        <begin position="1"/>
        <end position="263"/>
    </location>
</feature>
<protein>
    <recommendedName>
        <fullName evidence="1">ATP synthase subunit delta</fullName>
    </recommendedName>
    <alternativeName>
        <fullName evidence="1">ATP synthase F(1) sector subunit delta</fullName>
    </alternativeName>
    <alternativeName>
        <fullName evidence="1">F-type ATPase subunit delta</fullName>
        <shortName evidence="1">F-ATPase subunit delta</shortName>
    </alternativeName>
</protein>
<accession>Q6AG61</accession>
<sequence>MGSATREARARSVSALAGLGSKADLATAEDLFAAGRVVADSVQLRAVLSDPAADRSGKDVLVKRVFGALSAPAVELLGVIAGERWSGQDDVLDAIEELGIRSIAASAPRTVDIPAELLAFGGAVTSDAELELALRSKLADPSAKAALVERLLVGKAAGQTVAITRQLVLQPRGRSVRQALREAARIVAAQDGQTIATVVTATPLPAAQAERLRASLAAKYGDLKLNQVVDPSILGGMRVQIGGDVIDGSVSSRLSKLRLQLAG</sequence>
<keyword id="KW-0066">ATP synthesis</keyword>
<keyword id="KW-1003">Cell membrane</keyword>
<keyword id="KW-0139">CF(1)</keyword>
<keyword id="KW-0375">Hydrogen ion transport</keyword>
<keyword id="KW-0406">Ion transport</keyword>
<keyword id="KW-0472">Membrane</keyword>
<keyword id="KW-1185">Reference proteome</keyword>
<keyword id="KW-0813">Transport</keyword>
<gene>
    <name evidence="1" type="primary">atpH</name>
    <name type="ordered locus">Lxx07020</name>
</gene>
<reference key="1">
    <citation type="journal article" date="2004" name="Mol. Plant Microbe Interact.">
        <title>The genome sequence of the Gram-positive sugarcane pathogen Leifsonia xyli subsp. xyli.</title>
        <authorList>
            <person name="Monteiro-Vitorello C.B."/>
            <person name="Camargo L.E.A."/>
            <person name="Van Sluys M.A."/>
            <person name="Kitajima J.P."/>
            <person name="Truffi D."/>
            <person name="do Amaral A.M."/>
            <person name="Harakava R."/>
            <person name="de Oliveira J.C.F."/>
            <person name="Wood D."/>
            <person name="de Oliveira M.C."/>
            <person name="Miyaki C.Y."/>
            <person name="Takita M.A."/>
            <person name="da Silva A.C.R."/>
            <person name="Furlan L.R."/>
            <person name="Carraro D.M."/>
            <person name="Camarotte G."/>
            <person name="Almeida N.F. Jr."/>
            <person name="Carrer H."/>
            <person name="Coutinho L.L."/>
            <person name="El-Dorry H.A."/>
            <person name="Ferro M.I.T."/>
            <person name="Gagliardi P.R."/>
            <person name="Giglioti E."/>
            <person name="Goldman M.H.S."/>
            <person name="Goldman G.H."/>
            <person name="Kimura E.T."/>
            <person name="Ferro E.S."/>
            <person name="Kuramae E.E."/>
            <person name="Lemos E.G.M."/>
            <person name="Lemos M.V.F."/>
            <person name="Mauro S.M.Z."/>
            <person name="Machado M.A."/>
            <person name="Marino C.L."/>
            <person name="Menck C.F."/>
            <person name="Nunes L.R."/>
            <person name="Oliveira R.C."/>
            <person name="Pereira G.G."/>
            <person name="Siqueira W."/>
            <person name="de Souza A.A."/>
            <person name="Tsai S.M."/>
            <person name="Zanca A.S."/>
            <person name="Simpson A.J.G."/>
            <person name="Brumbley S.M."/>
            <person name="Setubal J.C."/>
        </authorList>
    </citation>
    <scope>NUCLEOTIDE SEQUENCE [LARGE SCALE GENOMIC DNA]</scope>
    <source>
        <strain>CTCB07</strain>
    </source>
</reference>
<dbReference type="EMBL" id="AE016822">
    <property type="protein sequence ID" value="AAT88634.1"/>
    <property type="molecule type" value="Genomic_DNA"/>
</dbReference>
<dbReference type="RefSeq" id="WP_011185633.1">
    <property type="nucleotide sequence ID" value="NC_006087.1"/>
</dbReference>
<dbReference type="SMR" id="Q6AG61"/>
<dbReference type="STRING" id="281090.Lxx07020"/>
<dbReference type="KEGG" id="lxx:Lxx07020"/>
<dbReference type="eggNOG" id="COG0712">
    <property type="taxonomic scope" value="Bacteria"/>
</dbReference>
<dbReference type="HOGENOM" id="CLU_088880_0_0_11"/>
<dbReference type="Proteomes" id="UP000001306">
    <property type="component" value="Chromosome"/>
</dbReference>
<dbReference type="GO" id="GO:0005886">
    <property type="term" value="C:plasma membrane"/>
    <property type="evidence" value="ECO:0007669"/>
    <property type="project" value="UniProtKB-SubCell"/>
</dbReference>
<dbReference type="GO" id="GO:0045259">
    <property type="term" value="C:proton-transporting ATP synthase complex"/>
    <property type="evidence" value="ECO:0007669"/>
    <property type="project" value="UniProtKB-KW"/>
</dbReference>
<dbReference type="GO" id="GO:0046933">
    <property type="term" value="F:proton-transporting ATP synthase activity, rotational mechanism"/>
    <property type="evidence" value="ECO:0007669"/>
    <property type="project" value="UniProtKB-UniRule"/>
</dbReference>
<dbReference type="HAMAP" id="MF_01416">
    <property type="entry name" value="ATP_synth_delta_bact"/>
    <property type="match status" value="1"/>
</dbReference>
<dbReference type="InterPro" id="IPR020781">
    <property type="entry name" value="ATPase_OSCP/d_CS"/>
</dbReference>
<dbReference type="InterPro" id="IPR000711">
    <property type="entry name" value="ATPase_OSCP/dsu"/>
</dbReference>
<dbReference type="NCBIfam" id="NF009967">
    <property type="entry name" value="PRK13430.1"/>
    <property type="match status" value="1"/>
</dbReference>
<dbReference type="PANTHER" id="PTHR11910">
    <property type="entry name" value="ATP SYNTHASE DELTA CHAIN"/>
    <property type="match status" value="1"/>
</dbReference>
<dbReference type="Pfam" id="PF00213">
    <property type="entry name" value="OSCP"/>
    <property type="match status" value="1"/>
</dbReference>
<dbReference type="PRINTS" id="PR00125">
    <property type="entry name" value="ATPASEDELTA"/>
</dbReference>
<dbReference type="PROSITE" id="PS00389">
    <property type="entry name" value="ATPASE_DELTA"/>
    <property type="match status" value="1"/>
</dbReference>
<comment type="function">
    <text evidence="1">F(1)F(0) ATP synthase produces ATP from ADP in the presence of a proton or sodium gradient. F-type ATPases consist of two structural domains, F(1) containing the extramembraneous catalytic core and F(0) containing the membrane proton channel, linked together by a central stalk and a peripheral stalk. During catalysis, ATP synthesis in the catalytic domain of F(1) is coupled via a rotary mechanism of the central stalk subunits to proton translocation.</text>
</comment>
<comment type="function">
    <text evidence="1">This protein is part of the stalk that links CF(0) to CF(1). It either transmits conformational changes from CF(0) to CF(1) or is implicated in proton conduction.</text>
</comment>
<comment type="subunit">
    <text evidence="1">F-type ATPases have 2 components, F(1) - the catalytic core - and F(0) - the membrane proton channel. F(1) has five subunits: alpha(3), beta(3), gamma(1), delta(1), epsilon(1). F(0) has three main subunits: a(1), b(2) and c(10-14). The alpha and beta chains form an alternating ring which encloses part of the gamma chain. F(1) is attached to F(0) by a central stalk formed by the gamma and epsilon chains, while a peripheral stalk is formed by the delta and b chains.</text>
</comment>
<comment type="subcellular location">
    <subcellularLocation>
        <location evidence="1">Cell membrane</location>
        <topology evidence="1">Peripheral membrane protein</topology>
    </subcellularLocation>
</comment>
<comment type="similarity">
    <text evidence="1">Belongs to the ATPase delta chain family.</text>
</comment>
<name>ATPD_LEIXX</name>
<evidence type="ECO:0000255" key="1">
    <source>
        <dbReference type="HAMAP-Rule" id="MF_01416"/>
    </source>
</evidence>
<organism>
    <name type="scientific">Leifsonia xyli subsp. xyli (strain CTCB07)</name>
    <dbReference type="NCBI Taxonomy" id="281090"/>
    <lineage>
        <taxon>Bacteria</taxon>
        <taxon>Bacillati</taxon>
        <taxon>Actinomycetota</taxon>
        <taxon>Actinomycetes</taxon>
        <taxon>Micrococcales</taxon>
        <taxon>Microbacteriaceae</taxon>
        <taxon>Leifsonia</taxon>
    </lineage>
</organism>